<name>RS16_DEIDV</name>
<accession>C1CUU1</accession>
<reference key="1">
    <citation type="journal article" date="2009" name="PLoS Genet.">
        <title>Alliance of proteomics and genomics to unravel the specificities of Sahara bacterium Deinococcus deserti.</title>
        <authorList>
            <person name="de Groot A."/>
            <person name="Dulermo R."/>
            <person name="Ortet P."/>
            <person name="Blanchard L."/>
            <person name="Guerin P."/>
            <person name="Fernandez B."/>
            <person name="Vacherie B."/>
            <person name="Dossat C."/>
            <person name="Jolivet E."/>
            <person name="Siguier P."/>
            <person name="Chandler M."/>
            <person name="Barakat M."/>
            <person name="Dedieu A."/>
            <person name="Barbe V."/>
            <person name="Heulin T."/>
            <person name="Sommer S."/>
            <person name="Achouak W."/>
            <person name="Armengaud J."/>
        </authorList>
    </citation>
    <scope>NUCLEOTIDE SEQUENCE [LARGE SCALE GENOMIC DNA]</scope>
    <source>
        <strain>DSM 17065 / CIP 109153 / LMG 22923 / VCD115</strain>
    </source>
</reference>
<feature type="chain" id="PRO_1000205752" description="Small ribosomal subunit protein bS16">
    <location>
        <begin position="1"/>
        <end position="82"/>
    </location>
</feature>
<keyword id="KW-1185">Reference proteome</keyword>
<keyword id="KW-0687">Ribonucleoprotein</keyword>
<keyword id="KW-0689">Ribosomal protein</keyword>
<sequence>MVKIRLSRFGSTHNPHYRIVVTDARRPRDGGYIENLGHYDPRKTTETYLKVNTERAAYWLAQGAQPTQTARRLLKAQGVKVA</sequence>
<gene>
    <name evidence="1" type="primary">rpsP</name>
    <name type="ordered locus">Deide_10660</name>
</gene>
<comment type="similarity">
    <text evidence="1">Belongs to the bacterial ribosomal protein bS16 family.</text>
</comment>
<organism>
    <name type="scientific">Deinococcus deserti (strain DSM 17065 / CIP 109153 / LMG 22923 / VCD115)</name>
    <dbReference type="NCBI Taxonomy" id="546414"/>
    <lineage>
        <taxon>Bacteria</taxon>
        <taxon>Thermotogati</taxon>
        <taxon>Deinococcota</taxon>
        <taxon>Deinococci</taxon>
        <taxon>Deinococcales</taxon>
        <taxon>Deinococcaceae</taxon>
        <taxon>Deinococcus</taxon>
    </lineage>
</organism>
<proteinExistence type="inferred from homology"/>
<dbReference type="EMBL" id="CP001114">
    <property type="protein sequence ID" value="ACO45958.1"/>
    <property type="molecule type" value="Genomic_DNA"/>
</dbReference>
<dbReference type="RefSeq" id="WP_012693081.1">
    <property type="nucleotide sequence ID" value="NC_012526.1"/>
</dbReference>
<dbReference type="SMR" id="C1CUU1"/>
<dbReference type="STRING" id="546414.Deide_10660"/>
<dbReference type="PaxDb" id="546414-Deide_10660"/>
<dbReference type="KEGG" id="ddr:Deide_10660"/>
<dbReference type="eggNOG" id="COG0228">
    <property type="taxonomic scope" value="Bacteria"/>
</dbReference>
<dbReference type="HOGENOM" id="CLU_100590_5_0_0"/>
<dbReference type="OrthoDB" id="9807878at2"/>
<dbReference type="Proteomes" id="UP000002208">
    <property type="component" value="Chromosome"/>
</dbReference>
<dbReference type="GO" id="GO:0005737">
    <property type="term" value="C:cytoplasm"/>
    <property type="evidence" value="ECO:0007669"/>
    <property type="project" value="UniProtKB-ARBA"/>
</dbReference>
<dbReference type="GO" id="GO:0015935">
    <property type="term" value="C:small ribosomal subunit"/>
    <property type="evidence" value="ECO:0007669"/>
    <property type="project" value="TreeGrafter"/>
</dbReference>
<dbReference type="GO" id="GO:0003735">
    <property type="term" value="F:structural constituent of ribosome"/>
    <property type="evidence" value="ECO:0007669"/>
    <property type="project" value="InterPro"/>
</dbReference>
<dbReference type="GO" id="GO:0006412">
    <property type="term" value="P:translation"/>
    <property type="evidence" value="ECO:0007669"/>
    <property type="project" value="UniProtKB-UniRule"/>
</dbReference>
<dbReference type="FunFam" id="3.30.1320.10:FF:000005">
    <property type="entry name" value="30S ribosomal protein S16"/>
    <property type="match status" value="1"/>
</dbReference>
<dbReference type="Gene3D" id="3.30.1320.10">
    <property type="match status" value="1"/>
</dbReference>
<dbReference type="HAMAP" id="MF_00385">
    <property type="entry name" value="Ribosomal_bS16"/>
    <property type="match status" value="1"/>
</dbReference>
<dbReference type="InterPro" id="IPR000307">
    <property type="entry name" value="Ribosomal_bS16"/>
</dbReference>
<dbReference type="InterPro" id="IPR023803">
    <property type="entry name" value="Ribosomal_bS16_dom_sf"/>
</dbReference>
<dbReference type="NCBIfam" id="TIGR00002">
    <property type="entry name" value="S16"/>
    <property type="match status" value="1"/>
</dbReference>
<dbReference type="PANTHER" id="PTHR12919">
    <property type="entry name" value="30S RIBOSOMAL PROTEIN S16"/>
    <property type="match status" value="1"/>
</dbReference>
<dbReference type="PANTHER" id="PTHR12919:SF20">
    <property type="entry name" value="SMALL RIBOSOMAL SUBUNIT PROTEIN BS16M"/>
    <property type="match status" value="1"/>
</dbReference>
<dbReference type="Pfam" id="PF00886">
    <property type="entry name" value="Ribosomal_S16"/>
    <property type="match status" value="1"/>
</dbReference>
<dbReference type="SUPFAM" id="SSF54565">
    <property type="entry name" value="Ribosomal protein S16"/>
    <property type="match status" value="1"/>
</dbReference>
<evidence type="ECO:0000255" key="1">
    <source>
        <dbReference type="HAMAP-Rule" id="MF_00385"/>
    </source>
</evidence>
<evidence type="ECO:0000305" key="2"/>
<protein>
    <recommendedName>
        <fullName evidence="1">Small ribosomal subunit protein bS16</fullName>
    </recommendedName>
    <alternativeName>
        <fullName evidence="2">30S ribosomal protein S16</fullName>
    </alternativeName>
</protein>